<comment type="function">
    <text evidence="1">Involved in peptide bond synthesis. Alleviates ribosome stalling that occurs when 3 or more consecutive Pro residues or the sequence PPG is present in a protein, possibly by augmenting the peptidyl transferase activity of the ribosome. Modification of Lys-34 is required for alleviation.</text>
</comment>
<comment type="pathway">
    <text evidence="1">Protein biosynthesis; polypeptide chain elongation.</text>
</comment>
<comment type="subcellular location">
    <subcellularLocation>
        <location evidence="1">Cytoplasm</location>
    </subcellularLocation>
</comment>
<comment type="PTM">
    <text evidence="1">Is beta-lysylated on the epsilon-amino group of Lys-34 by the combined action of EpmA and EpmB, and then hydroxylated on the C5 position of the same residue by EpmC. Lysylation is critical for the stimulatory effect of EF-P on peptide-bond formation. The lysylation moiety would extend toward the peptidyltransferase center and stabilize the terminal 3-CCA end of the tRNA. The hydroxylation of the C5 position on Lys-34 would allow additional potential stabilizing hydrogen-bond interactions with the P-tRNA.</text>
</comment>
<comment type="similarity">
    <text evidence="1">Belongs to the elongation factor P family.</text>
</comment>
<name>EFP_SALHS</name>
<reference key="1">
    <citation type="journal article" date="2011" name="J. Bacteriol.">
        <title>Comparative genomics of 28 Salmonella enterica isolates: evidence for CRISPR-mediated adaptive sublineage evolution.</title>
        <authorList>
            <person name="Fricke W.F."/>
            <person name="Mammel M.K."/>
            <person name="McDermott P.F."/>
            <person name="Tartera C."/>
            <person name="White D.G."/>
            <person name="Leclerc J.E."/>
            <person name="Ravel J."/>
            <person name="Cebula T.A."/>
        </authorList>
    </citation>
    <scope>NUCLEOTIDE SEQUENCE [LARGE SCALE GENOMIC DNA]</scope>
    <source>
        <strain>SL476</strain>
    </source>
</reference>
<accession>B4TF84</accession>
<dbReference type="EMBL" id="CP001120">
    <property type="protein sequence ID" value="ACF66539.1"/>
    <property type="molecule type" value="Genomic_DNA"/>
</dbReference>
<dbReference type="RefSeq" id="WP_000257282.1">
    <property type="nucleotide sequence ID" value="NC_011083.1"/>
</dbReference>
<dbReference type="SMR" id="B4TF84"/>
<dbReference type="GeneID" id="66758562"/>
<dbReference type="KEGG" id="seh:SeHA_C4752"/>
<dbReference type="HOGENOM" id="CLU_074944_0_0_6"/>
<dbReference type="UniPathway" id="UPA00345"/>
<dbReference type="Proteomes" id="UP000001866">
    <property type="component" value="Chromosome"/>
</dbReference>
<dbReference type="GO" id="GO:0005829">
    <property type="term" value="C:cytosol"/>
    <property type="evidence" value="ECO:0007669"/>
    <property type="project" value="UniProtKB-ARBA"/>
</dbReference>
<dbReference type="GO" id="GO:0003746">
    <property type="term" value="F:translation elongation factor activity"/>
    <property type="evidence" value="ECO:0007669"/>
    <property type="project" value="UniProtKB-UniRule"/>
</dbReference>
<dbReference type="GO" id="GO:0043043">
    <property type="term" value="P:peptide biosynthetic process"/>
    <property type="evidence" value="ECO:0007669"/>
    <property type="project" value="InterPro"/>
</dbReference>
<dbReference type="CDD" id="cd04470">
    <property type="entry name" value="S1_EF-P_repeat_1"/>
    <property type="match status" value="1"/>
</dbReference>
<dbReference type="CDD" id="cd05794">
    <property type="entry name" value="S1_EF-P_repeat_2"/>
    <property type="match status" value="1"/>
</dbReference>
<dbReference type="FunFam" id="2.30.30.30:FF:000003">
    <property type="entry name" value="Elongation factor P"/>
    <property type="match status" value="1"/>
</dbReference>
<dbReference type="FunFam" id="2.40.50.140:FF:000004">
    <property type="entry name" value="Elongation factor P"/>
    <property type="match status" value="1"/>
</dbReference>
<dbReference type="FunFam" id="2.40.50.140:FF:000009">
    <property type="entry name" value="Elongation factor P"/>
    <property type="match status" value="1"/>
</dbReference>
<dbReference type="Gene3D" id="2.30.30.30">
    <property type="match status" value="1"/>
</dbReference>
<dbReference type="Gene3D" id="2.40.50.140">
    <property type="entry name" value="Nucleic acid-binding proteins"/>
    <property type="match status" value="2"/>
</dbReference>
<dbReference type="HAMAP" id="MF_00141">
    <property type="entry name" value="EF_P"/>
    <property type="match status" value="1"/>
</dbReference>
<dbReference type="InterPro" id="IPR015365">
    <property type="entry name" value="Elong-fact-P_C"/>
</dbReference>
<dbReference type="InterPro" id="IPR012340">
    <property type="entry name" value="NA-bd_OB-fold"/>
</dbReference>
<dbReference type="InterPro" id="IPR014722">
    <property type="entry name" value="Rib_uL2_dom2"/>
</dbReference>
<dbReference type="InterPro" id="IPR020599">
    <property type="entry name" value="Transl_elong_fac_P/YeiP"/>
</dbReference>
<dbReference type="InterPro" id="IPR013185">
    <property type="entry name" value="Transl_elong_KOW-like"/>
</dbReference>
<dbReference type="InterPro" id="IPR001059">
    <property type="entry name" value="Transl_elong_P/YeiP_cen"/>
</dbReference>
<dbReference type="InterPro" id="IPR013852">
    <property type="entry name" value="Transl_elong_P/YeiP_CS"/>
</dbReference>
<dbReference type="InterPro" id="IPR011768">
    <property type="entry name" value="Transl_elongation_fac_P"/>
</dbReference>
<dbReference type="InterPro" id="IPR008991">
    <property type="entry name" value="Translation_prot_SH3-like_sf"/>
</dbReference>
<dbReference type="NCBIfam" id="TIGR00038">
    <property type="entry name" value="efp"/>
    <property type="match status" value="1"/>
</dbReference>
<dbReference type="NCBIfam" id="NF001810">
    <property type="entry name" value="PRK00529.1"/>
    <property type="match status" value="1"/>
</dbReference>
<dbReference type="PANTHER" id="PTHR30053">
    <property type="entry name" value="ELONGATION FACTOR P"/>
    <property type="match status" value="1"/>
</dbReference>
<dbReference type="PANTHER" id="PTHR30053:SF12">
    <property type="entry name" value="ELONGATION FACTOR P (EF-P) FAMILY PROTEIN"/>
    <property type="match status" value="1"/>
</dbReference>
<dbReference type="Pfam" id="PF01132">
    <property type="entry name" value="EFP"/>
    <property type="match status" value="1"/>
</dbReference>
<dbReference type="Pfam" id="PF08207">
    <property type="entry name" value="EFP_N"/>
    <property type="match status" value="1"/>
</dbReference>
<dbReference type="Pfam" id="PF09285">
    <property type="entry name" value="Elong-fact-P_C"/>
    <property type="match status" value="1"/>
</dbReference>
<dbReference type="PIRSF" id="PIRSF005901">
    <property type="entry name" value="EF-P"/>
    <property type="match status" value="1"/>
</dbReference>
<dbReference type="SMART" id="SM01185">
    <property type="entry name" value="EFP"/>
    <property type="match status" value="1"/>
</dbReference>
<dbReference type="SMART" id="SM00841">
    <property type="entry name" value="Elong-fact-P_C"/>
    <property type="match status" value="1"/>
</dbReference>
<dbReference type="SUPFAM" id="SSF50249">
    <property type="entry name" value="Nucleic acid-binding proteins"/>
    <property type="match status" value="2"/>
</dbReference>
<dbReference type="SUPFAM" id="SSF50104">
    <property type="entry name" value="Translation proteins SH3-like domain"/>
    <property type="match status" value="1"/>
</dbReference>
<dbReference type="PROSITE" id="PS01275">
    <property type="entry name" value="EFP"/>
    <property type="match status" value="1"/>
</dbReference>
<keyword id="KW-0963">Cytoplasm</keyword>
<keyword id="KW-0251">Elongation factor</keyword>
<keyword id="KW-0379">Hydroxylation</keyword>
<keyword id="KW-0648">Protein biosynthesis</keyword>
<organism>
    <name type="scientific">Salmonella heidelberg (strain SL476)</name>
    <dbReference type="NCBI Taxonomy" id="454169"/>
    <lineage>
        <taxon>Bacteria</taxon>
        <taxon>Pseudomonadati</taxon>
        <taxon>Pseudomonadota</taxon>
        <taxon>Gammaproteobacteria</taxon>
        <taxon>Enterobacterales</taxon>
        <taxon>Enterobacteriaceae</taxon>
        <taxon>Salmonella</taxon>
    </lineage>
</organism>
<sequence length="188" mass="20623">MATYYSNDFRSGLKIMLDGEPYAVESSEFVKPGKGQAFARVKLRRLLTGTRVEKTFKSTDSAEGADVVDMNLTYLYNDGEFWHFMNNETFEQLSADAKAIGDNAKWLLDQAECIVTLWNGQPISVTPPNFVELEIVDTDPGLKGDTAGTGGKPATLSTGAVVKVPLFVQIGEVIKVDTRSGEYVSRVK</sequence>
<gene>
    <name evidence="1" type="primary">efp</name>
    <name type="ordered locus">SeHA_C4752</name>
</gene>
<feature type="chain" id="PRO_1000096201" description="Elongation factor P">
    <location>
        <begin position="1"/>
        <end position="188"/>
    </location>
</feature>
<feature type="modified residue" description="N6-(3,6-diaminohexanoyl)-5-hydroxylysine" evidence="1">
    <location>
        <position position="34"/>
    </location>
</feature>
<protein>
    <recommendedName>
        <fullName evidence="1">Elongation factor P</fullName>
        <shortName evidence="1">EF-P</shortName>
    </recommendedName>
</protein>
<evidence type="ECO:0000255" key="1">
    <source>
        <dbReference type="HAMAP-Rule" id="MF_00141"/>
    </source>
</evidence>
<proteinExistence type="inferred from homology"/>